<keyword id="KW-0067">ATP-binding</keyword>
<keyword id="KW-0963">Cytoplasm</keyword>
<keyword id="KW-1015">Disulfide bond</keyword>
<keyword id="KW-0446">Lipid-binding</keyword>
<keyword id="KW-0547">Nucleotide-binding</keyword>
<keyword id="KW-0597">Phosphoprotein</keyword>
<keyword id="KW-0646">Protease inhibitor</keyword>
<keyword id="KW-1185">Reference proteome</keyword>
<keyword id="KW-0722">Serine protease inhibitor</keyword>
<accession>Q3YIX4</accession>
<evidence type="ECO:0000250" key="1"/>
<evidence type="ECO:0000250" key="2">
    <source>
        <dbReference type="UniProtKB" id="P30086"/>
    </source>
</evidence>
<evidence type="ECO:0000250" key="3">
    <source>
        <dbReference type="UniProtKB" id="P31044"/>
    </source>
</evidence>
<evidence type="ECO:0000305" key="4"/>
<feature type="chain" id="PRO_0000276760" description="Phosphatidylethanolamine-binding protein 1">
    <location>
        <begin position="1"/>
        <end position="187"/>
    </location>
</feature>
<feature type="peptide" id="PRO_0000276761" description="Hippocampal cholinergic neurostimulating peptide">
    <location>
        <begin position="1"/>
        <end position="12"/>
    </location>
</feature>
<feature type="region of interest" description="Interaction with RAF1" evidence="1">
    <location>
        <begin position="93"/>
        <end position="134"/>
    </location>
</feature>
<feature type="modified residue" description="Phosphoserine" evidence="3">
    <location>
        <position position="13"/>
    </location>
</feature>
<feature type="modified residue" description="Phosphothreonine" evidence="2">
    <location>
        <position position="42"/>
    </location>
</feature>
<feature type="modified residue" description="Phosphoserine" evidence="2">
    <location>
        <position position="52"/>
    </location>
</feature>
<feature type="modified residue" description="Phosphoserine" evidence="2">
    <location>
        <position position="98"/>
    </location>
</feature>
<feature type="modified residue" description="Phosphoserine" evidence="2">
    <location>
        <position position="153"/>
    </location>
</feature>
<sequence length="187" mass="20922">MPVDLGKWSGPLSLQEVEERPQHALHVKYTGTEVDELGKVLTPTQVKNRPTSIAWDGLDPGKLYTLVLTDPDAPSRKDPKYREWHHFLVVNMKGNDISSGTVLSDYVGSGPPKGTGLHRYVWLVYEQSGPLKCDEPILSNRSGDHRGKFKVASFRKKYELGPPVAGTCYQAEWDDYVPKLCEQLSGK</sequence>
<reference key="1">
    <citation type="journal article" date="2005" name="Chem. Biol.">
        <title>A chemical inhibitor reveals the role of Raf kinase inhibitor protein in cell migration.</title>
        <authorList>
            <person name="Zhu S."/>
            <person name="Mc Henry K.T."/>
            <person name="Lane W.S."/>
            <person name="Fenteany G."/>
        </authorList>
    </citation>
    <scope>NUCLEOTIDE SEQUENCE [MRNA]</scope>
    <scope>INTERACTION WITH RAF1</scope>
    <scope>FUNCTION</scope>
    <source>
        <tissue>Kidney</tissue>
    </source>
</reference>
<dbReference type="EMBL" id="DQ130016">
    <property type="protein sequence ID" value="AAZ79335.1"/>
    <property type="molecule type" value="mRNA"/>
</dbReference>
<dbReference type="RefSeq" id="NP_001041557.1">
    <property type="nucleotide sequence ID" value="NM_001048092.1"/>
</dbReference>
<dbReference type="SMR" id="Q3YIX4"/>
<dbReference type="FunCoup" id="Q3YIX4">
    <property type="interactions" value="61"/>
</dbReference>
<dbReference type="STRING" id="9615.ENSCAFP00000059981"/>
<dbReference type="MEROPS" id="I51.002"/>
<dbReference type="PaxDb" id="9612-ENSCAFP00000014590"/>
<dbReference type="Ensembl" id="ENSCAFT00000015761.5">
    <property type="protein sequence ID" value="ENSCAFP00000014590.5"/>
    <property type="gene ID" value="ENSCAFG00000009910.5"/>
</dbReference>
<dbReference type="Ensembl" id="ENSCAFT00030046545.1">
    <property type="protein sequence ID" value="ENSCAFP00030040682.1"/>
    <property type="gene ID" value="ENSCAFG00030025209.1"/>
</dbReference>
<dbReference type="GeneID" id="477501"/>
<dbReference type="KEGG" id="cfa:477501"/>
<dbReference type="CTD" id="5037"/>
<dbReference type="eggNOG" id="KOG3346">
    <property type="taxonomic scope" value="Eukaryota"/>
</dbReference>
<dbReference type="InParanoid" id="Q3YIX4"/>
<dbReference type="OrthoDB" id="62at33554"/>
<dbReference type="Reactome" id="R-CFA-5674135">
    <property type="pathway name" value="MAP2K and MAPK activation"/>
</dbReference>
<dbReference type="Reactome" id="R-CFA-5675221">
    <property type="pathway name" value="Negative regulation of MAPK pathway"/>
</dbReference>
<dbReference type="Proteomes" id="UP000002254">
    <property type="component" value="Chromosome 26"/>
</dbReference>
<dbReference type="Proteomes" id="UP000694429">
    <property type="component" value="Chromosome 26"/>
</dbReference>
<dbReference type="Proteomes" id="UP000694542">
    <property type="component" value="Unplaced"/>
</dbReference>
<dbReference type="Proteomes" id="UP000805418">
    <property type="component" value="Unplaced"/>
</dbReference>
<dbReference type="GO" id="GO:0005737">
    <property type="term" value="C:cytoplasm"/>
    <property type="evidence" value="ECO:0007669"/>
    <property type="project" value="UniProtKB-SubCell"/>
</dbReference>
<dbReference type="GO" id="GO:0005524">
    <property type="term" value="F:ATP binding"/>
    <property type="evidence" value="ECO:0007669"/>
    <property type="project" value="UniProtKB-KW"/>
</dbReference>
<dbReference type="GO" id="GO:0008289">
    <property type="term" value="F:lipid binding"/>
    <property type="evidence" value="ECO:0007669"/>
    <property type="project" value="UniProtKB-KW"/>
</dbReference>
<dbReference type="GO" id="GO:0004867">
    <property type="term" value="F:serine-type endopeptidase inhibitor activity"/>
    <property type="evidence" value="ECO:0007669"/>
    <property type="project" value="UniProtKB-KW"/>
</dbReference>
<dbReference type="GO" id="GO:0043409">
    <property type="term" value="P:negative regulation of MAPK cascade"/>
    <property type="evidence" value="ECO:0000318"/>
    <property type="project" value="GO_Central"/>
</dbReference>
<dbReference type="CDD" id="cd00866">
    <property type="entry name" value="PEBP_euk"/>
    <property type="match status" value="1"/>
</dbReference>
<dbReference type="FunFam" id="3.90.280.10:FF:000003">
    <property type="entry name" value="phosphatidylethanolamine-binding protein 1"/>
    <property type="match status" value="1"/>
</dbReference>
<dbReference type="Gene3D" id="3.90.280.10">
    <property type="entry name" value="PEBP-like"/>
    <property type="match status" value="1"/>
</dbReference>
<dbReference type="InterPro" id="IPR008914">
    <property type="entry name" value="PEBP"/>
</dbReference>
<dbReference type="InterPro" id="IPR036610">
    <property type="entry name" value="PEBP-like_sf"/>
</dbReference>
<dbReference type="InterPro" id="IPR035810">
    <property type="entry name" value="PEBP_euk"/>
</dbReference>
<dbReference type="InterPro" id="IPR001858">
    <property type="entry name" value="Phosphatidylethanolamine-bd_CS"/>
</dbReference>
<dbReference type="PANTHER" id="PTHR11362">
    <property type="entry name" value="PHOSPHATIDYLETHANOLAMINE-BINDING PROTEIN"/>
    <property type="match status" value="1"/>
</dbReference>
<dbReference type="PANTHER" id="PTHR11362:SF151">
    <property type="entry name" value="PHOSPHATIDYLETHANOLAMINE-BINDING PROTEIN 1"/>
    <property type="match status" value="1"/>
</dbReference>
<dbReference type="Pfam" id="PF01161">
    <property type="entry name" value="PBP"/>
    <property type="match status" value="1"/>
</dbReference>
<dbReference type="SUPFAM" id="SSF49777">
    <property type="entry name" value="PEBP-like"/>
    <property type="match status" value="1"/>
</dbReference>
<dbReference type="PROSITE" id="PS01220">
    <property type="entry name" value="PBP"/>
    <property type="match status" value="1"/>
</dbReference>
<comment type="function">
    <text evidence="1">Binds ATP, opioids and phosphatidylethanolamine. Has lower affinity for phosphatidylinositol and phosphatidylcholine. Serine protease inhibitor which inhibits thrombin, neuropsin and chymotrypsin but not trypsin, tissue type plasminogen activator and elastase (By similarity). Involved in the positive regulation of epithelial cell migration. Inhibits the kinase activity of RAF1 by inhibiting its activation and by dissociating the RAF1/MEK complex and acting as a competitive inhibitor of MEK phosphorylation (By similarity).</text>
</comment>
<comment type="function">
    <text evidence="1">HCNP may be involved in the function of the presynaptic cholinergic neurons of the central nervous system. HCNP increases the production of choline acetyltransferase but not acetylcholinesterase. Seems to be mediated by a specific receptor (By similarity).</text>
</comment>
<comment type="subunit">
    <text evidence="1">Has a tendency to form dimers by disulfide cross-linking. Interacts with RAF1 and this interaction is enhanced if RAF1 is phosphorylated on residues 'Ser-338', 'Ser-339', 'Tyr-340' and 'Tyr-341'. Interacts with ALOX15; in response to IL13/interleukin-13, prevents the interaction of PEBP1 with RAF1 to activate the ERK signaling cascade (By similarity).</text>
</comment>
<comment type="subcellular location">
    <subcellularLocation>
        <location evidence="1">Cytoplasm</location>
    </subcellularLocation>
</comment>
<comment type="similarity">
    <text evidence="4">Belongs to the phosphatidylethanolamine-binding protein family.</text>
</comment>
<gene>
    <name type="primary">PEBP1</name>
    <name type="synonym">PBP</name>
</gene>
<protein>
    <recommendedName>
        <fullName>Phosphatidylethanolamine-binding protein 1</fullName>
        <shortName>PEBP-1</shortName>
    </recommendedName>
    <alternativeName>
        <fullName>HCNPpp</fullName>
    </alternativeName>
    <alternativeName>
        <fullName>Raf kinase inhibitor protein</fullName>
        <shortName>RKIP</shortName>
    </alternativeName>
    <component>
        <recommendedName>
            <fullName>Hippocampal cholinergic neurostimulating peptide</fullName>
            <shortName>HCNP</shortName>
        </recommendedName>
    </component>
</protein>
<proteinExistence type="evidence at protein level"/>
<organism>
    <name type="scientific">Canis lupus familiaris</name>
    <name type="common">Dog</name>
    <name type="synonym">Canis familiaris</name>
    <dbReference type="NCBI Taxonomy" id="9615"/>
    <lineage>
        <taxon>Eukaryota</taxon>
        <taxon>Metazoa</taxon>
        <taxon>Chordata</taxon>
        <taxon>Craniata</taxon>
        <taxon>Vertebrata</taxon>
        <taxon>Euteleostomi</taxon>
        <taxon>Mammalia</taxon>
        <taxon>Eutheria</taxon>
        <taxon>Laurasiatheria</taxon>
        <taxon>Carnivora</taxon>
        <taxon>Caniformia</taxon>
        <taxon>Canidae</taxon>
        <taxon>Canis</taxon>
    </lineage>
</organism>
<name>PEBP1_CANLF</name>